<dbReference type="EMBL" id="AC002333">
    <property type="protein sequence ID" value="AAB64038.1"/>
    <property type="status" value="ALT_SEQ"/>
    <property type="molecule type" value="Genomic_DNA"/>
</dbReference>
<dbReference type="EMBL" id="CP002685">
    <property type="protein sequence ID" value="AEC10305.1"/>
    <property type="molecule type" value="Genomic_DNA"/>
</dbReference>
<dbReference type="EMBL" id="CP002685">
    <property type="protein sequence ID" value="AEC10307.1"/>
    <property type="molecule type" value="Genomic_DNA"/>
</dbReference>
<dbReference type="EMBL" id="CP002685">
    <property type="protein sequence ID" value="ANM62407.1"/>
    <property type="molecule type" value="Genomic_DNA"/>
</dbReference>
<dbReference type="EMBL" id="CP002685">
    <property type="protein sequence ID" value="ANM62408.1"/>
    <property type="molecule type" value="Genomic_DNA"/>
</dbReference>
<dbReference type="EMBL" id="AY099822">
    <property type="protein sequence ID" value="AAM20673.1"/>
    <property type="molecule type" value="mRNA"/>
</dbReference>
<dbReference type="EMBL" id="BT008408">
    <property type="protein sequence ID" value="AAP37767.1"/>
    <property type="molecule type" value="mRNA"/>
</dbReference>
<dbReference type="EMBL" id="AK226517">
    <property type="protein sequence ID" value="BAE98657.1"/>
    <property type="molecule type" value="mRNA"/>
</dbReference>
<dbReference type="PIR" id="B84869">
    <property type="entry name" value="B84869"/>
</dbReference>
<dbReference type="RefSeq" id="NP_001154574.1">
    <molecule id="Q8LPG9-1"/>
    <property type="nucleotide sequence ID" value="NM_001161102.2"/>
</dbReference>
<dbReference type="RefSeq" id="NP_001318416.1">
    <molecule id="Q8LPG9-1"/>
    <property type="nucleotide sequence ID" value="NM_001337049.1"/>
</dbReference>
<dbReference type="RefSeq" id="NP_001324566.1">
    <molecule id="Q8LPG9-1"/>
    <property type="nucleotide sequence ID" value="NM_001337050.1"/>
</dbReference>
<dbReference type="RefSeq" id="NP_973681.2">
    <molecule id="Q8LPG9-1"/>
    <property type="nucleotide sequence ID" value="NM_201952.2"/>
</dbReference>
<dbReference type="SMR" id="Q8LPG9"/>
<dbReference type="BioGRID" id="4306">
    <property type="interactions" value="2"/>
</dbReference>
<dbReference type="FunCoup" id="Q8LPG9">
    <property type="interactions" value="1197"/>
</dbReference>
<dbReference type="STRING" id="3702.Q8LPG9"/>
<dbReference type="iPTMnet" id="Q8LPG9"/>
<dbReference type="PaxDb" id="3702-AT2G43680.1"/>
<dbReference type="ProteomicsDB" id="228832">
    <molecule id="Q8LPG9-1"/>
</dbReference>
<dbReference type="EnsemblPlants" id="AT2G43680.2">
    <molecule id="Q8LPG9-1"/>
    <property type="protein sequence ID" value="AT2G43680.2"/>
    <property type="gene ID" value="AT2G43680"/>
</dbReference>
<dbReference type="EnsemblPlants" id="AT2G43680.3">
    <molecule id="Q8LPG9-1"/>
    <property type="protein sequence ID" value="AT2G43680.3"/>
    <property type="gene ID" value="AT2G43680"/>
</dbReference>
<dbReference type="EnsemblPlants" id="AT2G43680.4">
    <molecule id="Q8LPG9-1"/>
    <property type="protein sequence ID" value="AT2G43680.4"/>
    <property type="gene ID" value="AT2G43680"/>
</dbReference>
<dbReference type="EnsemblPlants" id="AT2G43680.5">
    <molecule id="Q8LPG9-1"/>
    <property type="protein sequence ID" value="AT2G43680.5"/>
    <property type="gene ID" value="AT2G43680"/>
</dbReference>
<dbReference type="GeneID" id="818970"/>
<dbReference type="Gramene" id="AT2G43680.2">
    <molecule id="Q8LPG9-1"/>
    <property type="protein sequence ID" value="AT2G43680.2"/>
    <property type="gene ID" value="AT2G43680"/>
</dbReference>
<dbReference type="Gramene" id="AT2G43680.3">
    <molecule id="Q8LPG9-1"/>
    <property type="protein sequence ID" value="AT2G43680.3"/>
    <property type="gene ID" value="AT2G43680"/>
</dbReference>
<dbReference type="Gramene" id="AT2G43680.4">
    <molecule id="Q8LPG9-1"/>
    <property type="protein sequence ID" value="AT2G43680.4"/>
    <property type="gene ID" value="AT2G43680"/>
</dbReference>
<dbReference type="Gramene" id="AT2G43680.5">
    <molecule id="Q8LPG9-1"/>
    <property type="protein sequence ID" value="AT2G43680.5"/>
    <property type="gene ID" value="AT2G43680"/>
</dbReference>
<dbReference type="KEGG" id="ath:AT2G43680"/>
<dbReference type="Araport" id="AT2G43680"/>
<dbReference type="TAIR" id="AT2G43680">
    <property type="gene designation" value="IQD14"/>
</dbReference>
<dbReference type="eggNOG" id="ENOG502R9C0">
    <property type="taxonomic scope" value="Eukaryota"/>
</dbReference>
<dbReference type="HOGENOM" id="CLU_025762_0_0_1"/>
<dbReference type="InParanoid" id="Q8LPG9"/>
<dbReference type="PhylomeDB" id="Q8LPG9"/>
<dbReference type="PRO" id="PR:Q8LPG9"/>
<dbReference type="Proteomes" id="UP000006548">
    <property type="component" value="Chromosome 2"/>
</dbReference>
<dbReference type="ExpressionAtlas" id="Q8LPG9">
    <property type="expression patterns" value="baseline and differential"/>
</dbReference>
<dbReference type="GO" id="GO:0005737">
    <property type="term" value="C:cytoplasm"/>
    <property type="evidence" value="ECO:0007669"/>
    <property type="project" value="UniProtKB-KW"/>
</dbReference>
<dbReference type="GO" id="GO:0005856">
    <property type="term" value="C:cytoskeleton"/>
    <property type="evidence" value="ECO:0007669"/>
    <property type="project" value="UniProtKB-SubCell"/>
</dbReference>
<dbReference type="GO" id="GO:0005886">
    <property type="term" value="C:plasma membrane"/>
    <property type="evidence" value="ECO:0007669"/>
    <property type="project" value="UniProtKB-SubCell"/>
</dbReference>
<dbReference type="GO" id="GO:0005516">
    <property type="term" value="F:calmodulin binding"/>
    <property type="evidence" value="ECO:0007669"/>
    <property type="project" value="UniProtKB-KW"/>
</dbReference>
<dbReference type="GO" id="GO:0009834">
    <property type="term" value="P:plant-type secondary cell wall biogenesis"/>
    <property type="evidence" value="ECO:0000315"/>
    <property type="project" value="UniProtKB"/>
</dbReference>
<dbReference type="GO" id="GO:2000652">
    <property type="term" value="P:regulation of secondary cell wall biogenesis"/>
    <property type="evidence" value="ECO:0000315"/>
    <property type="project" value="UniProtKB"/>
</dbReference>
<dbReference type="GO" id="GO:0010089">
    <property type="term" value="P:xylem development"/>
    <property type="evidence" value="ECO:0000315"/>
    <property type="project" value="UniProtKB"/>
</dbReference>
<dbReference type="CDD" id="cd23767">
    <property type="entry name" value="IQCD"/>
    <property type="match status" value="1"/>
</dbReference>
<dbReference type="FunFam" id="1.20.5.190:FF:000086">
    <property type="entry name" value="IQ-domain 14"/>
    <property type="match status" value="1"/>
</dbReference>
<dbReference type="Gene3D" id="1.20.5.190">
    <property type="match status" value="1"/>
</dbReference>
<dbReference type="InterPro" id="IPR025064">
    <property type="entry name" value="DUF4005"/>
</dbReference>
<dbReference type="InterPro" id="IPR000048">
    <property type="entry name" value="IQ_motif_EF-hand-BS"/>
</dbReference>
<dbReference type="PANTHER" id="PTHR32295">
    <property type="entry name" value="IQ-DOMAIN 5-RELATED"/>
    <property type="match status" value="1"/>
</dbReference>
<dbReference type="PANTHER" id="PTHR32295:SF113">
    <property type="entry name" value="PROTEIN IQ-DOMAIN 14"/>
    <property type="match status" value="1"/>
</dbReference>
<dbReference type="Pfam" id="PF13178">
    <property type="entry name" value="DUF4005"/>
    <property type="match status" value="1"/>
</dbReference>
<dbReference type="Pfam" id="PF00612">
    <property type="entry name" value="IQ"/>
    <property type="match status" value="1"/>
</dbReference>
<dbReference type="SMART" id="SM00015">
    <property type="entry name" value="IQ"/>
    <property type="match status" value="1"/>
</dbReference>
<dbReference type="PROSITE" id="PS50096">
    <property type="entry name" value="IQ"/>
    <property type="match status" value="2"/>
</dbReference>
<accession>Q8LPG9</accession>
<accession>O22835</accession>
<organism>
    <name type="scientific">Arabidopsis thaliana</name>
    <name type="common">Mouse-ear cress</name>
    <dbReference type="NCBI Taxonomy" id="3702"/>
    <lineage>
        <taxon>Eukaryota</taxon>
        <taxon>Viridiplantae</taxon>
        <taxon>Streptophyta</taxon>
        <taxon>Embryophyta</taxon>
        <taxon>Tracheophyta</taxon>
        <taxon>Spermatophyta</taxon>
        <taxon>Magnoliopsida</taxon>
        <taxon>eudicotyledons</taxon>
        <taxon>Gunneridae</taxon>
        <taxon>Pentapetalae</taxon>
        <taxon>rosids</taxon>
        <taxon>malvids</taxon>
        <taxon>Brassicales</taxon>
        <taxon>Brassicaceae</taxon>
        <taxon>Camelineae</taxon>
        <taxon>Arabidopsis</taxon>
    </lineage>
</organism>
<name>IQD14_ARATH</name>
<comment type="function">
    <text evidence="1 4 5">May be involved in cooperative interactions with calmodulins or calmodulin-like proteins (By similarity). Recruits calmodulin proteins to microtubules, thus being a potential scaffold in cellular signaling and trafficking (PubMed:28115582). Regulates cell and organ shapes (prevents twisting) in aerial parts probably by regulating transverse microtubules (MT) arrays alignment (PubMed:28115582). Regulates the formation of oval xylem secondary cell-wall deposition pits through microtubule-dependent lateral inhibition of Rho GTPase domains, thus confining the area of active ROP domains within the lattice of the cortical microtubules (PubMed:28803875). May associate with nucleic acids and regulate gene expression at the transcriptional or post-transcriptional level (By similarity).</text>
</comment>
<comment type="subunit">
    <text evidence="1">Binds to multiple calmodulin (CaM) in the presence of Ca(2+) and CaM-like proteins.</text>
</comment>
<comment type="subcellular location">
    <subcellularLocation>
        <location evidence="4">Cell membrane</location>
    </subcellularLocation>
    <subcellularLocation>
        <location evidence="4">Cytoplasm</location>
        <location evidence="4">Cytoskeleton</location>
    </subcellularLocation>
</comment>
<comment type="alternative products">
    <event type="alternative splicing"/>
    <isoform>
        <id>Q8LPG9-1</id>
        <name>1</name>
        <sequence type="displayed"/>
    </isoform>
    <text>A number of isoforms are produced. According to EST sequences.</text>
</comment>
<comment type="tissue specificity">
    <text evidence="4">Expressed in hypocotyls, cotyledons, leaves and petioles.</text>
</comment>
<comment type="disruption phenotype">
    <text evidence="5">The double mutant iqd13 iqd14 exhibits abnormally large and round secondary cell-wall pits in roots metaxylem vessels.</text>
</comment>
<comment type="similarity">
    <text evidence="7">Belongs to the IQD family.</text>
</comment>
<comment type="sequence caution" evidence="7">
    <conflict type="erroneous gene model prediction">
        <sequence resource="EMBL-CDS" id="AAB64038"/>
    </conflict>
</comment>
<proteinExistence type="evidence at protein level"/>
<protein>
    <recommendedName>
        <fullName evidence="6">Protein IQ-DOMAIN 14</fullName>
        <shortName evidence="6">AtIQD14</shortName>
    </recommendedName>
</protein>
<sequence length="668" mass="74282">MVKKGSWFSAIKRVFTPHSKEKLANEPERKSGKEKKKKGFGKLRHGETNSFLPIFREPSSIEKILGEAERDHNLVFRPPTPDRPNPYSASPPPRPASPRVASPRPTSPRVASPRVPSPRAEVPRTLSPKPPSPRAEVPRSLSPKPPSPRADLPRSLSPKPFDRSKPSSASANAPPTLRPASTRVPSQRITPHSVPSPRPSSPRGASPQAISSKPPSPRAEPPTLDTPRPPSPRAASLRADPPRLDAARPTTPRPPSPLADAPRLDAPRPTTPKPPSPRSDPPRLDAPRPTTPKPPSPRSVSPRAVQRREIVYRPEPTLPVQHASATKIQGAFRGYMARKSFRALKGLVRLQGVVRGYSVKRQTINAMKYMQQVVRVQSQIQSRRIKMLENQAQVEKDEAKWAASEAGNDNWDDSVLTKEERDSRSQRKTDAIIKRERSMAYAYSRKLWKNSPKSTQDNRSFPQWWNWVDRQNPLASPAPSYSQPQRDFRLTPSRLCPSPLSQSSKQHHIRLDNHFDTSTPRSSRSTFHTPSRPIHTGTSRYSRGRLRGQDSPFKDDDSLTSCPPFPSYMAPTVSAKAKVRPNSNPKERVMGTPVSEKRRMSYPPTQDTFRWNKGSLVMSNSSSHRGPGSPGGVVLEKHKTLKSVGNLSIGSTASMATTVGRKEFNRFV</sequence>
<feature type="chain" id="PRO_0000311121" description="Protein IQ-DOMAIN 14">
    <location>
        <begin position="1"/>
        <end position="668"/>
    </location>
</feature>
<feature type="domain" description="IQ 1" evidence="2">
    <location>
        <begin position="321"/>
        <end position="350"/>
    </location>
</feature>
<feature type="domain" description="IQ 2" evidence="2">
    <location>
        <begin position="343"/>
        <end position="372"/>
    </location>
</feature>
<feature type="region of interest" description="Calmodulin-binding" evidence="6">
    <location>
        <begin position="1"/>
        <end position="11"/>
    </location>
</feature>
<feature type="region of interest" description="Disordered" evidence="3">
    <location>
        <begin position="16"/>
        <end position="54"/>
    </location>
</feature>
<feature type="region of interest" description="Disordered" evidence="3">
    <location>
        <begin position="66"/>
        <end position="305"/>
    </location>
</feature>
<feature type="region of interest" description="Disordered" evidence="3">
    <location>
        <begin position="399"/>
        <end position="431"/>
    </location>
</feature>
<feature type="region of interest" description="Disordered" evidence="3">
    <location>
        <begin position="476"/>
        <end position="561"/>
    </location>
</feature>
<feature type="compositionally biased region" description="Basic and acidic residues" evidence="3">
    <location>
        <begin position="18"/>
        <end position="31"/>
    </location>
</feature>
<feature type="compositionally biased region" description="Basic residues" evidence="3">
    <location>
        <begin position="32"/>
        <end position="43"/>
    </location>
</feature>
<feature type="compositionally biased region" description="Pro residues" evidence="3">
    <location>
        <begin position="78"/>
        <end position="96"/>
    </location>
</feature>
<feature type="compositionally biased region" description="Low complexity" evidence="3">
    <location>
        <begin position="97"/>
        <end position="120"/>
    </location>
</feature>
<feature type="compositionally biased region" description="Low complexity" evidence="3">
    <location>
        <begin position="166"/>
        <end position="175"/>
    </location>
</feature>
<feature type="compositionally biased region" description="Pro residues" evidence="3">
    <location>
        <begin position="269"/>
        <end position="279"/>
    </location>
</feature>
<feature type="compositionally biased region" description="Basic and acidic residues" evidence="3">
    <location>
        <begin position="415"/>
        <end position="431"/>
    </location>
</feature>
<feature type="compositionally biased region" description="Polar residues" evidence="3">
    <location>
        <begin position="516"/>
        <end position="529"/>
    </location>
</feature>
<gene>
    <name evidence="6" type="primary">IQD14</name>
    <name evidence="8" type="ordered locus">At2g43680</name>
    <name evidence="9" type="ORF">F18O19.21</name>
</gene>
<keyword id="KW-0025">Alternative splicing</keyword>
<keyword id="KW-0112">Calmodulin-binding</keyword>
<keyword id="KW-1003">Cell membrane</keyword>
<keyword id="KW-0963">Cytoplasm</keyword>
<keyword id="KW-0206">Cytoskeleton</keyword>
<keyword id="KW-0472">Membrane</keyword>
<keyword id="KW-1185">Reference proteome</keyword>
<keyword id="KW-0677">Repeat</keyword>
<evidence type="ECO:0000250" key="1">
    <source>
        <dbReference type="UniProtKB" id="Q9SF32"/>
    </source>
</evidence>
<evidence type="ECO:0000255" key="2">
    <source>
        <dbReference type="PROSITE-ProRule" id="PRU00116"/>
    </source>
</evidence>
<evidence type="ECO:0000256" key="3">
    <source>
        <dbReference type="SAM" id="MobiDB-lite"/>
    </source>
</evidence>
<evidence type="ECO:0000269" key="4">
    <source>
    </source>
</evidence>
<evidence type="ECO:0000269" key="5">
    <source>
    </source>
</evidence>
<evidence type="ECO:0000303" key="6">
    <source>
    </source>
</evidence>
<evidence type="ECO:0000305" key="7"/>
<evidence type="ECO:0000312" key="8">
    <source>
        <dbReference type="Araport" id="AT2G43680"/>
    </source>
</evidence>
<evidence type="ECO:0000312" key="9">
    <source>
        <dbReference type="EMBL" id="AAB64038.1"/>
    </source>
</evidence>
<reference key="1">
    <citation type="journal article" date="1999" name="Nature">
        <title>Sequence and analysis of chromosome 2 of the plant Arabidopsis thaliana.</title>
        <authorList>
            <person name="Lin X."/>
            <person name="Kaul S."/>
            <person name="Rounsley S.D."/>
            <person name="Shea T.P."/>
            <person name="Benito M.-I."/>
            <person name="Town C.D."/>
            <person name="Fujii C.Y."/>
            <person name="Mason T.M."/>
            <person name="Bowman C.L."/>
            <person name="Barnstead M.E."/>
            <person name="Feldblyum T.V."/>
            <person name="Buell C.R."/>
            <person name="Ketchum K.A."/>
            <person name="Lee J.J."/>
            <person name="Ronning C.M."/>
            <person name="Koo H.L."/>
            <person name="Moffat K.S."/>
            <person name="Cronin L.A."/>
            <person name="Shen M."/>
            <person name="Pai G."/>
            <person name="Van Aken S."/>
            <person name="Umayam L."/>
            <person name="Tallon L.J."/>
            <person name="Gill J.E."/>
            <person name="Adams M.D."/>
            <person name="Carrera A.J."/>
            <person name="Creasy T.H."/>
            <person name="Goodman H.M."/>
            <person name="Somerville C.R."/>
            <person name="Copenhaver G.P."/>
            <person name="Preuss D."/>
            <person name="Nierman W.C."/>
            <person name="White O."/>
            <person name="Eisen J.A."/>
            <person name="Salzberg S.L."/>
            <person name="Fraser C.M."/>
            <person name="Venter J.C."/>
        </authorList>
    </citation>
    <scope>NUCLEOTIDE SEQUENCE [LARGE SCALE GENOMIC DNA]</scope>
    <source>
        <strain>cv. Columbia</strain>
    </source>
</reference>
<reference key="2">
    <citation type="journal article" date="2017" name="Plant J.">
        <title>Araport11: a complete reannotation of the Arabidopsis thaliana reference genome.</title>
        <authorList>
            <person name="Cheng C.Y."/>
            <person name="Krishnakumar V."/>
            <person name="Chan A.P."/>
            <person name="Thibaud-Nissen F."/>
            <person name="Schobel S."/>
            <person name="Town C.D."/>
        </authorList>
    </citation>
    <scope>GENOME REANNOTATION</scope>
    <source>
        <strain>cv. Columbia</strain>
    </source>
</reference>
<reference key="3">
    <citation type="journal article" date="2003" name="Science">
        <title>Empirical analysis of transcriptional activity in the Arabidopsis genome.</title>
        <authorList>
            <person name="Yamada K."/>
            <person name="Lim J."/>
            <person name="Dale J.M."/>
            <person name="Chen H."/>
            <person name="Shinn P."/>
            <person name="Palm C.J."/>
            <person name="Southwick A.M."/>
            <person name="Wu H.C."/>
            <person name="Kim C.J."/>
            <person name="Nguyen M."/>
            <person name="Pham P.K."/>
            <person name="Cheuk R.F."/>
            <person name="Karlin-Newmann G."/>
            <person name="Liu S.X."/>
            <person name="Lam B."/>
            <person name="Sakano H."/>
            <person name="Wu T."/>
            <person name="Yu G."/>
            <person name="Miranda M."/>
            <person name="Quach H.L."/>
            <person name="Tripp M."/>
            <person name="Chang C.H."/>
            <person name="Lee J.M."/>
            <person name="Toriumi M.J."/>
            <person name="Chan M.M."/>
            <person name="Tang C.C."/>
            <person name="Onodera C.S."/>
            <person name="Deng J.M."/>
            <person name="Akiyama K."/>
            <person name="Ansari Y."/>
            <person name="Arakawa T."/>
            <person name="Banh J."/>
            <person name="Banno F."/>
            <person name="Bowser L."/>
            <person name="Brooks S.Y."/>
            <person name="Carninci P."/>
            <person name="Chao Q."/>
            <person name="Choy N."/>
            <person name="Enju A."/>
            <person name="Goldsmith A.D."/>
            <person name="Gurjal M."/>
            <person name="Hansen N.F."/>
            <person name="Hayashizaki Y."/>
            <person name="Johnson-Hopson C."/>
            <person name="Hsuan V.W."/>
            <person name="Iida K."/>
            <person name="Karnes M."/>
            <person name="Khan S."/>
            <person name="Koesema E."/>
            <person name="Ishida J."/>
            <person name="Jiang P.X."/>
            <person name="Jones T."/>
            <person name="Kawai J."/>
            <person name="Kamiya A."/>
            <person name="Meyers C."/>
            <person name="Nakajima M."/>
            <person name="Narusaka M."/>
            <person name="Seki M."/>
            <person name="Sakurai T."/>
            <person name="Satou M."/>
            <person name="Tamse R."/>
            <person name="Vaysberg M."/>
            <person name="Wallender E.K."/>
            <person name="Wong C."/>
            <person name="Yamamura Y."/>
            <person name="Yuan S."/>
            <person name="Shinozaki K."/>
            <person name="Davis R.W."/>
            <person name="Theologis A."/>
            <person name="Ecker J.R."/>
        </authorList>
    </citation>
    <scope>NUCLEOTIDE SEQUENCE [LARGE SCALE MRNA]</scope>
    <source>
        <strain>cv. Columbia</strain>
    </source>
</reference>
<reference key="4">
    <citation type="submission" date="2006-07" db="EMBL/GenBank/DDBJ databases">
        <title>Large-scale analysis of RIKEN Arabidopsis full-length (RAFL) cDNAs.</title>
        <authorList>
            <person name="Totoki Y."/>
            <person name="Seki M."/>
            <person name="Ishida J."/>
            <person name="Nakajima M."/>
            <person name="Enju A."/>
            <person name="Kamiya A."/>
            <person name="Narusaka M."/>
            <person name="Shin-i T."/>
            <person name="Nakagawa M."/>
            <person name="Sakamoto N."/>
            <person name="Oishi K."/>
            <person name="Kohara Y."/>
            <person name="Kobayashi M."/>
            <person name="Toyoda A."/>
            <person name="Sakaki Y."/>
            <person name="Sakurai T."/>
            <person name="Iida K."/>
            <person name="Akiyama K."/>
            <person name="Satou M."/>
            <person name="Toyoda T."/>
            <person name="Konagaya A."/>
            <person name="Carninci P."/>
            <person name="Kawai J."/>
            <person name="Hayashizaki Y."/>
            <person name="Shinozaki K."/>
        </authorList>
    </citation>
    <scope>NUCLEOTIDE SEQUENCE [LARGE SCALE MRNA]</scope>
    <source>
        <strain>cv. Columbia</strain>
    </source>
</reference>
<reference key="5">
    <citation type="journal article" date="2005" name="BMC Evol. Biol.">
        <title>Genome-wide comparative analysis of the IQD gene families in Arabidopsis thaliana and Oryza sativa.</title>
        <authorList>
            <person name="Abel S."/>
            <person name="Savchenko T."/>
            <person name="Levy M."/>
        </authorList>
    </citation>
    <scope>INTERACTION WITH CALMODULIN</scope>
    <scope>GENE FAMILY</scope>
    <scope>NOMENCLATURE</scope>
    <source>
        <strain>cv. Columbia</strain>
    </source>
</reference>
<reference key="6">
    <citation type="journal article" date="2009" name="Plant Physiol.">
        <title>Large-scale Arabidopsis phosphoproteome profiling reveals novel chloroplast kinase substrates and phosphorylation networks.</title>
        <authorList>
            <person name="Reiland S."/>
            <person name="Messerli G."/>
            <person name="Baerenfaller K."/>
            <person name="Gerrits B."/>
            <person name="Endler A."/>
            <person name="Grossmann J."/>
            <person name="Gruissem W."/>
            <person name="Baginsky S."/>
        </authorList>
    </citation>
    <scope>IDENTIFICATION BY MASS SPECTROMETRY [LARGE SCALE ANALYSIS]</scope>
</reference>
<reference key="7">
    <citation type="journal article" date="2017" name="Curr. Biol.">
        <title>A novel plasma membrane-anchored protein regulates xylem cell-wall deposition through microtubule-dependent lateral inhibition of Rho GTPase domains.</title>
        <authorList>
            <person name="Sugiyama Y."/>
            <person name="Wakazaki M."/>
            <person name="Toyooka K."/>
            <person name="Fukuda H."/>
            <person name="Oda Y."/>
        </authorList>
    </citation>
    <scope>FUNCTION</scope>
    <scope>DISRUPTION PHENOTYPE</scope>
    <source>
        <strain>cv. Columbia</strain>
    </source>
</reference>
<reference key="8">
    <citation type="journal article" date="2017" name="Plant Physiol.">
        <title>The IQD family of calmodulin-binding proteins links calcium signaling to microtubules, membrane subdomains, and the nucleus.</title>
        <authorList>
            <person name="Buerstenbinder K."/>
            <person name="Moeller B."/>
            <person name="Ploetner R."/>
            <person name="Stamm G."/>
            <person name="Hause G."/>
            <person name="Mitra D."/>
            <person name="Abel S."/>
        </authorList>
    </citation>
    <scope>FUNCTION</scope>
    <scope>SUBCELLULAR LOCATION</scope>
    <scope>TISSUE SPECIFICITY</scope>
    <source>
        <strain>cv. Columbia</strain>
    </source>
</reference>
<reference key="9">
    <citation type="journal article" date="2017" name="Plant Signal. Behav.">
        <title>Functions of IQD proteins as hubs in cellular calcium and auxin signaling: A toolbox for shape formation and tissue-specification in plants?</title>
        <authorList>
            <person name="Buerstenbinder K."/>
            <person name="Mitra D."/>
            <person name="Quegwer J."/>
        </authorList>
    </citation>
    <scope>REVIEW</scope>
</reference>